<gene>
    <name evidence="1" type="primary">engB</name>
    <name type="ordered locus">Adeh_2681</name>
</gene>
<comment type="function">
    <text evidence="1">Necessary for normal cell division and for the maintenance of normal septation.</text>
</comment>
<comment type="cofactor">
    <cofactor evidence="1">
        <name>Mg(2+)</name>
        <dbReference type="ChEBI" id="CHEBI:18420"/>
    </cofactor>
</comment>
<comment type="similarity">
    <text evidence="1">Belongs to the TRAFAC class TrmE-Era-EngA-EngB-Septin-like GTPase superfamily. EngB GTPase family.</text>
</comment>
<keyword id="KW-0131">Cell cycle</keyword>
<keyword id="KW-0132">Cell division</keyword>
<keyword id="KW-0342">GTP-binding</keyword>
<keyword id="KW-0460">Magnesium</keyword>
<keyword id="KW-0479">Metal-binding</keyword>
<keyword id="KW-0547">Nucleotide-binding</keyword>
<keyword id="KW-1185">Reference proteome</keyword>
<keyword id="KW-0717">Septation</keyword>
<reference key="1">
    <citation type="submission" date="2006-01" db="EMBL/GenBank/DDBJ databases">
        <title>Complete sequence of Anaeromyxobacter dehalogenans 2CP-C.</title>
        <authorList>
            <person name="Copeland A."/>
            <person name="Lucas S."/>
            <person name="Lapidus A."/>
            <person name="Barry K."/>
            <person name="Detter J.C."/>
            <person name="Glavina T."/>
            <person name="Hammon N."/>
            <person name="Israni S."/>
            <person name="Pitluck S."/>
            <person name="Brettin T."/>
            <person name="Bruce D."/>
            <person name="Han C."/>
            <person name="Tapia R."/>
            <person name="Gilna P."/>
            <person name="Kiss H."/>
            <person name="Schmutz J."/>
            <person name="Larimer F."/>
            <person name="Land M."/>
            <person name="Kyrpides N."/>
            <person name="Anderson I."/>
            <person name="Sanford R.A."/>
            <person name="Ritalahti K.M."/>
            <person name="Thomas H.S."/>
            <person name="Kirby J.R."/>
            <person name="Zhulin I.B."/>
            <person name="Loeffler F.E."/>
            <person name="Richardson P."/>
        </authorList>
    </citation>
    <scope>NUCLEOTIDE SEQUENCE [LARGE SCALE GENOMIC DNA]</scope>
    <source>
        <strain>2CP-C</strain>
    </source>
</reference>
<protein>
    <recommendedName>
        <fullName evidence="1">Probable GTP-binding protein EngB</fullName>
    </recommendedName>
</protein>
<dbReference type="EMBL" id="CP000251">
    <property type="protein sequence ID" value="ABC82451.1"/>
    <property type="molecule type" value="Genomic_DNA"/>
</dbReference>
<dbReference type="RefSeq" id="WP_011421733.1">
    <property type="nucleotide sequence ID" value="NC_007760.1"/>
</dbReference>
<dbReference type="SMR" id="Q2ILB9"/>
<dbReference type="STRING" id="290397.Adeh_2681"/>
<dbReference type="KEGG" id="ade:Adeh_2681"/>
<dbReference type="eggNOG" id="COG0218">
    <property type="taxonomic scope" value="Bacteria"/>
</dbReference>
<dbReference type="HOGENOM" id="CLU_033732_3_0_7"/>
<dbReference type="OrthoDB" id="9804921at2"/>
<dbReference type="Proteomes" id="UP000001935">
    <property type="component" value="Chromosome"/>
</dbReference>
<dbReference type="GO" id="GO:0005829">
    <property type="term" value="C:cytosol"/>
    <property type="evidence" value="ECO:0007669"/>
    <property type="project" value="TreeGrafter"/>
</dbReference>
<dbReference type="GO" id="GO:0005525">
    <property type="term" value="F:GTP binding"/>
    <property type="evidence" value="ECO:0007669"/>
    <property type="project" value="UniProtKB-UniRule"/>
</dbReference>
<dbReference type="GO" id="GO:0046872">
    <property type="term" value="F:metal ion binding"/>
    <property type="evidence" value="ECO:0007669"/>
    <property type="project" value="UniProtKB-KW"/>
</dbReference>
<dbReference type="GO" id="GO:0000917">
    <property type="term" value="P:division septum assembly"/>
    <property type="evidence" value="ECO:0007669"/>
    <property type="project" value="UniProtKB-KW"/>
</dbReference>
<dbReference type="CDD" id="cd01876">
    <property type="entry name" value="YihA_EngB"/>
    <property type="match status" value="1"/>
</dbReference>
<dbReference type="Gene3D" id="3.40.50.300">
    <property type="entry name" value="P-loop containing nucleotide triphosphate hydrolases"/>
    <property type="match status" value="1"/>
</dbReference>
<dbReference type="HAMAP" id="MF_00321">
    <property type="entry name" value="GTPase_EngB"/>
    <property type="match status" value="1"/>
</dbReference>
<dbReference type="InterPro" id="IPR030393">
    <property type="entry name" value="G_ENGB_dom"/>
</dbReference>
<dbReference type="InterPro" id="IPR006073">
    <property type="entry name" value="GTP-bd"/>
</dbReference>
<dbReference type="InterPro" id="IPR019987">
    <property type="entry name" value="GTP-bd_ribosome_bio_YsxC"/>
</dbReference>
<dbReference type="InterPro" id="IPR027417">
    <property type="entry name" value="P-loop_NTPase"/>
</dbReference>
<dbReference type="NCBIfam" id="TIGR03598">
    <property type="entry name" value="GTPase_YsxC"/>
    <property type="match status" value="1"/>
</dbReference>
<dbReference type="PANTHER" id="PTHR11649:SF13">
    <property type="entry name" value="ENGB-TYPE G DOMAIN-CONTAINING PROTEIN"/>
    <property type="match status" value="1"/>
</dbReference>
<dbReference type="PANTHER" id="PTHR11649">
    <property type="entry name" value="MSS1/TRME-RELATED GTP-BINDING PROTEIN"/>
    <property type="match status" value="1"/>
</dbReference>
<dbReference type="Pfam" id="PF01926">
    <property type="entry name" value="MMR_HSR1"/>
    <property type="match status" value="1"/>
</dbReference>
<dbReference type="SUPFAM" id="SSF52540">
    <property type="entry name" value="P-loop containing nucleoside triphosphate hydrolases"/>
    <property type="match status" value="1"/>
</dbReference>
<dbReference type="PROSITE" id="PS51706">
    <property type="entry name" value="G_ENGB"/>
    <property type="match status" value="1"/>
</dbReference>
<organism>
    <name type="scientific">Anaeromyxobacter dehalogenans (strain 2CP-C)</name>
    <dbReference type="NCBI Taxonomy" id="290397"/>
    <lineage>
        <taxon>Bacteria</taxon>
        <taxon>Pseudomonadati</taxon>
        <taxon>Myxococcota</taxon>
        <taxon>Myxococcia</taxon>
        <taxon>Myxococcales</taxon>
        <taxon>Cystobacterineae</taxon>
        <taxon>Anaeromyxobacteraceae</taxon>
        <taxon>Anaeromyxobacter</taxon>
    </lineage>
</organism>
<name>ENGB_ANADE</name>
<sequence length="216" mass="23500">MPIQVVSADFDKTATRPEEWPRGATPEIAFVGRSNVGKSSMLNALARRKGLARVSSTPGRTRALQFFDLSYRPTPAARPRAIRFCDLPGYGYAKVSRAERDRWTAMIEDYLRDRDVLRAVVLIVDARHAPSESDEDAAAFLVSAGRRLVVAATKTDKLPKARRVLALQQVERALGLARGDAVPFSAVEGTGTDALWARLAALAAEEARTAEADPPA</sequence>
<accession>Q2ILB9</accession>
<proteinExistence type="inferred from homology"/>
<feature type="chain" id="PRO_0000266807" description="Probable GTP-binding protein EngB">
    <location>
        <begin position="1"/>
        <end position="216"/>
    </location>
</feature>
<feature type="domain" description="EngB-type G" evidence="1">
    <location>
        <begin position="24"/>
        <end position="205"/>
    </location>
</feature>
<feature type="binding site" evidence="1">
    <location>
        <begin position="32"/>
        <end position="39"/>
    </location>
    <ligand>
        <name>GTP</name>
        <dbReference type="ChEBI" id="CHEBI:37565"/>
    </ligand>
</feature>
<feature type="binding site" evidence="1">
    <location>
        <position position="39"/>
    </location>
    <ligand>
        <name>Mg(2+)</name>
        <dbReference type="ChEBI" id="CHEBI:18420"/>
    </ligand>
</feature>
<feature type="binding site" evidence="1">
    <location>
        <begin position="59"/>
        <end position="63"/>
    </location>
    <ligand>
        <name>GTP</name>
        <dbReference type="ChEBI" id="CHEBI:37565"/>
    </ligand>
</feature>
<feature type="binding site" evidence="1">
    <location>
        <position position="61"/>
    </location>
    <ligand>
        <name>Mg(2+)</name>
        <dbReference type="ChEBI" id="CHEBI:18420"/>
    </ligand>
</feature>
<feature type="binding site" evidence="1">
    <location>
        <begin position="86"/>
        <end position="89"/>
    </location>
    <ligand>
        <name>GTP</name>
        <dbReference type="ChEBI" id="CHEBI:37565"/>
    </ligand>
</feature>
<feature type="binding site" evidence="1">
    <location>
        <begin position="153"/>
        <end position="156"/>
    </location>
    <ligand>
        <name>GTP</name>
        <dbReference type="ChEBI" id="CHEBI:37565"/>
    </ligand>
</feature>
<feature type="binding site" evidence="1">
    <location>
        <begin position="184"/>
        <end position="186"/>
    </location>
    <ligand>
        <name>GTP</name>
        <dbReference type="ChEBI" id="CHEBI:37565"/>
    </ligand>
</feature>
<evidence type="ECO:0000255" key="1">
    <source>
        <dbReference type="HAMAP-Rule" id="MF_00321"/>
    </source>
</evidence>